<comment type="function">
    <text>PsaA and PsaB bind P700, the primary electron donor of photosystem I (PSI), as well as the electron acceptors A0, A1 and FX. PSI is a plastocyanin-ferredoxin oxidoreductase, converting photonic excitation into a charge separation, which transfers an electron from the donor P700 chlorophyll pair to the spectroscopically characterized acceptors A0, A1, FX, FA and FB in turn. Oxidized P700 is reduced on the lumenal side of the thylakoid membrane by plastocyanin.</text>
</comment>
<comment type="catalytic activity">
    <reaction evidence="1">
        <text>reduced [plastocyanin] + hnu + oxidized [2Fe-2S]-[ferredoxin] = oxidized [plastocyanin] + reduced [2Fe-2S]-[ferredoxin]</text>
        <dbReference type="Rhea" id="RHEA:30407"/>
        <dbReference type="Rhea" id="RHEA-COMP:10000"/>
        <dbReference type="Rhea" id="RHEA-COMP:10001"/>
        <dbReference type="Rhea" id="RHEA-COMP:10039"/>
        <dbReference type="Rhea" id="RHEA-COMP:10040"/>
        <dbReference type="ChEBI" id="CHEBI:29036"/>
        <dbReference type="ChEBI" id="CHEBI:30212"/>
        <dbReference type="ChEBI" id="CHEBI:33737"/>
        <dbReference type="ChEBI" id="CHEBI:33738"/>
        <dbReference type="ChEBI" id="CHEBI:49552"/>
        <dbReference type="EC" id="1.97.1.12"/>
    </reaction>
</comment>
<comment type="cofactor">
    <text evidence="1">P700 is a chlorophyll a/chlorophyll a' dimer, A0 is one or more chlorophyll a, A1 is one or both phylloquinones and FX is a shared 4Fe-4S iron-sulfur center.</text>
</comment>
<comment type="subunit">
    <text evidence="1">The PsaA/B heterodimer binds the P700 chlorophyll special pair and subsequent electron acceptors. PSI consists of a core antenna complex that captures photons, and an electron transfer chain that converts photonic excitation into a charge separation. The eukaryotic PSI reaction center is composed of at least 11 subunits.</text>
</comment>
<comment type="subcellular location">
    <subcellularLocation>
        <location evidence="1">Plastid</location>
        <location evidence="1">Chloroplast thylakoid membrane</location>
        <topology evidence="1">Multi-pass membrane protein</topology>
    </subcellularLocation>
</comment>
<comment type="similarity">
    <text evidence="1">Belongs to the PsaA/PsaB family.</text>
</comment>
<protein>
    <recommendedName>
        <fullName evidence="1">Photosystem I P700 chlorophyll a apoprotein A1</fullName>
        <ecNumber evidence="1">1.97.1.12</ecNumber>
    </recommendedName>
    <alternativeName>
        <fullName evidence="1">PSI-A</fullName>
    </alternativeName>
    <alternativeName>
        <fullName evidence="1">PsaA</fullName>
    </alternativeName>
</protein>
<gene>
    <name evidence="1" type="primary">psaA</name>
</gene>
<accession>Q9MUJ0</accession>
<dbReference type="EC" id="1.97.1.12" evidence="1"/>
<dbReference type="EMBL" id="AF180025">
    <property type="protein sequence ID" value="AAF29826.1"/>
    <property type="molecule type" value="Genomic_DNA"/>
</dbReference>
<dbReference type="SMR" id="Q9MUJ0"/>
<dbReference type="GO" id="GO:0009535">
    <property type="term" value="C:chloroplast thylakoid membrane"/>
    <property type="evidence" value="ECO:0007669"/>
    <property type="project" value="UniProtKB-SubCell"/>
</dbReference>
<dbReference type="GO" id="GO:0009522">
    <property type="term" value="C:photosystem I"/>
    <property type="evidence" value="ECO:0007669"/>
    <property type="project" value="UniProtKB-KW"/>
</dbReference>
<dbReference type="GO" id="GO:0051539">
    <property type="term" value="F:4 iron, 4 sulfur cluster binding"/>
    <property type="evidence" value="ECO:0007669"/>
    <property type="project" value="UniProtKB-KW"/>
</dbReference>
<dbReference type="GO" id="GO:0016168">
    <property type="term" value="F:chlorophyll binding"/>
    <property type="evidence" value="ECO:0007669"/>
    <property type="project" value="UniProtKB-KW"/>
</dbReference>
<dbReference type="GO" id="GO:0046872">
    <property type="term" value="F:metal ion binding"/>
    <property type="evidence" value="ECO:0007669"/>
    <property type="project" value="UniProtKB-KW"/>
</dbReference>
<dbReference type="GO" id="GO:0016491">
    <property type="term" value="F:oxidoreductase activity"/>
    <property type="evidence" value="ECO:0007669"/>
    <property type="project" value="UniProtKB-KW"/>
</dbReference>
<dbReference type="GO" id="GO:0015979">
    <property type="term" value="P:photosynthesis"/>
    <property type="evidence" value="ECO:0007669"/>
    <property type="project" value="UniProtKB-KW"/>
</dbReference>
<dbReference type="FunFam" id="1.20.1130.10:FF:000001">
    <property type="entry name" value="Photosystem I P700 chlorophyll a apoprotein A2"/>
    <property type="match status" value="1"/>
</dbReference>
<dbReference type="Gene3D" id="1.20.1130.10">
    <property type="entry name" value="Photosystem I PsaA/PsaB"/>
    <property type="match status" value="1"/>
</dbReference>
<dbReference type="HAMAP" id="MF_00458">
    <property type="entry name" value="PSI_PsaA"/>
    <property type="match status" value="1"/>
</dbReference>
<dbReference type="InterPro" id="IPR006243">
    <property type="entry name" value="PSI_PsaA"/>
</dbReference>
<dbReference type="InterPro" id="IPR001280">
    <property type="entry name" value="PSI_PsaA/B"/>
</dbReference>
<dbReference type="InterPro" id="IPR020586">
    <property type="entry name" value="PSI_PsaA/B_CS"/>
</dbReference>
<dbReference type="InterPro" id="IPR036408">
    <property type="entry name" value="PSI_PsaA/B_sf"/>
</dbReference>
<dbReference type="NCBIfam" id="TIGR01335">
    <property type="entry name" value="psaA"/>
    <property type="match status" value="1"/>
</dbReference>
<dbReference type="PANTHER" id="PTHR30128">
    <property type="entry name" value="OUTER MEMBRANE PROTEIN, OMPA-RELATED"/>
    <property type="match status" value="1"/>
</dbReference>
<dbReference type="PANTHER" id="PTHR30128:SF19">
    <property type="entry name" value="PHOTOSYSTEM I P700 CHLOROPHYLL A APOPROTEIN A1-RELATED"/>
    <property type="match status" value="1"/>
</dbReference>
<dbReference type="Pfam" id="PF00223">
    <property type="entry name" value="PsaA_PsaB"/>
    <property type="match status" value="1"/>
</dbReference>
<dbReference type="PIRSF" id="PIRSF002905">
    <property type="entry name" value="PSI_A"/>
    <property type="match status" value="1"/>
</dbReference>
<dbReference type="PRINTS" id="PR00257">
    <property type="entry name" value="PHOTSYSPSAAB"/>
</dbReference>
<dbReference type="SUPFAM" id="SSF81558">
    <property type="entry name" value="Photosystem I subunits PsaA/PsaB"/>
    <property type="match status" value="1"/>
</dbReference>
<dbReference type="PROSITE" id="PS00419">
    <property type="entry name" value="PHOTOSYSTEM_I_PSAAB"/>
    <property type="match status" value="1"/>
</dbReference>
<sequence length="719" mass="79798">LKIVVERDPIKTSFEKWAKPGHFSKTLAKGPNTTTWIWNLHADAHDFDSHTNDLEEISRKVFSAHFGQLAIIFIWLSGMYFHGARFSNYEAWLGDPTHIKPSAQVVWPIVGQEILNGDVGGGFRGIQITSGFFQIWRASGITSELQLYCTATGALIFAALMLFAGWFHYHKAAPKLAWFQDVESMLNHHLAGLLGLGSLGWAGHQVHVSLPINQLLDAGVDPKEIPLPHEFISNRDLLAQLYPSFAEGLTPFFTLNWSEYSDFLTFRGGLNPVTGGLWLTDTAHHHLAIAILFLIAGHMYRTNWGIGHNLKEILEAHKGPFTGEGHRGLYEILTTSWHAQLALNLAMLGSLTIVVAHHMYSMPPYPYLAIDYGTQLSLFTHHMWIGGFLIVGAAAHAAIFMVRDYDPTTQYNNLLDRVLRHRDAIVSHLNWACIFLGFHSFGLYIHNDTMSALGRPQDMFSDTAIQLQPIFAQWIQNTHASSPSLTAPDATASTSLTWGGGDLVAVGAKVALLPIPLGTADFLVHHIHAFTIHVTVLILLKGVLFARSSRLIPDKVNLGFRFPCDGPGRGGTCQVSAWDHVFLGLFWMYNAISVVIFHFSWKMQSDVWGSISDQGVVTHITGGNFAQSSITINGWLRDFLWAQASQVIQSYGSSLSAYGLFFLGAHFVWAFSLMFLFSGRGYWQELIESIVWAHNKLKVAPAIQPRALSIVQGRAVGVA</sequence>
<keyword id="KW-0004">4Fe-4S</keyword>
<keyword id="KW-0148">Chlorophyll</keyword>
<keyword id="KW-0150">Chloroplast</keyword>
<keyword id="KW-0157">Chromophore</keyword>
<keyword id="KW-0249">Electron transport</keyword>
<keyword id="KW-0408">Iron</keyword>
<keyword id="KW-0411">Iron-sulfur</keyword>
<keyword id="KW-0460">Magnesium</keyword>
<keyword id="KW-0472">Membrane</keyword>
<keyword id="KW-0479">Metal-binding</keyword>
<keyword id="KW-0560">Oxidoreductase</keyword>
<keyword id="KW-0602">Photosynthesis</keyword>
<keyword id="KW-0603">Photosystem I</keyword>
<keyword id="KW-0934">Plastid</keyword>
<keyword id="KW-0793">Thylakoid</keyword>
<keyword id="KW-0812">Transmembrane</keyword>
<keyword id="KW-1133">Transmembrane helix</keyword>
<keyword id="KW-0813">Transport</keyword>
<evidence type="ECO:0000255" key="1">
    <source>
        <dbReference type="HAMAP-Rule" id="MF_00458"/>
    </source>
</evidence>
<reference key="1">
    <citation type="journal article" date="2000" name="Mol. Biol. Evol.">
        <title>Error, bias, and long-branch attraction in data for two chloroplast photosystem genes in seed plants.</title>
        <authorList>
            <person name="Sanderson M.J."/>
            <person name="Wojciechowski M.F."/>
            <person name="Hu J.-M."/>
            <person name="Sher Khan T."/>
            <person name="Brady S.G."/>
        </authorList>
    </citation>
    <scope>NUCLEOTIDE SEQUENCE [GENOMIC DNA]</scope>
</reference>
<organism>
    <name type="scientific">Torreya californica</name>
    <name type="common">California nutmeg</name>
    <dbReference type="NCBI Taxonomy" id="89482"/>
    <lineage>
        <taxon>Eukaryota</taxon>
        <taxon>Viridiplantae</taxon>
        <taxon>Streptophyta</taxon>
        <taxon>Embryophyta</taxon>
        <taxon>Tracheophyta</taxon>
        <taxon>Spermatophyta</taxon>
        <taxon>Pinopsida</taxon>
        <taxon>Pinidae</taxon>
        <taxon>Conifers II</taxon>
        <taxon>Cupressales</taxon>
        <taxon>Taxaceae</taxon>
        <taxon>Torreya</taxon>
    </lineage>
</organism>
<name>PSAA_TORCL</name>
<feature type="chain" id="PRO_0000088580" description="Photosystem I P700 chlorophyll a apoprotein A1">
    <location>
        <begin position="1" status="less than"/>
        <end position="719" status="greater than"/>
    </location>
</feature>
<feature type="transmembrane region" description="Helical; Name=I" evidence="1">
    <location>
        <begin position="61"/>
        <end position="84"/>
    </location>
</feature>
<feature type="transmembrane region" description="Helical; Name=II" evidence="1">
    <location>
        <begin position="147"/>
        <end position="170"/>
    </location>
</feature>
<feature type="transmembrane region" description="Helical; Name=III" evidence="1">
    <location>
        <begin position="186"/>
        <end position="210"/>
    </location>
</feature>
<feature type="transmembrane region" description="Helical; Name=IV" evidence="1">
    <location>
        <begin position="282"/>
        <end position="300"/>
    </location>
</feature>
<feature type="transmembrane region" description="Helical; Name=V" evidence="1">
    <location>
        <begin position="337"/>
        <end position="360"/>
    </location>
</feature>
<feature type="transmembrane region" description="Helical; Name=VI" evidence="1">
    <location>
        <begin position="376"/>
        <end position="402"/>
    </location>
</feature>
<feature type="transmembrane region" description="Helical; Name=VII" evidence="1">
    <location>
        <begin position="424"/>
        <end position="446"/>
    </location>
</feature>
<feature type="transmembrane region" description="Helical; Name=VIII" evidence="1">
    <location>
        <begin position="522"/>
        <end position="540"/>
    </location>
</feature>
<feature type="transmembrane region" description="Helical; Name=IX" evidence="1">
    <location>
        <begin position="580"/>
        <end position="601"/>
    </location>
</feature>
<feature type="transmembrane region" description="Helical; Name=X" evidence="1">
    <location>
        <begin position="655"/>
        <end position="677"/>
    </location>
</feature>
<feature type="transmembrane region" description="Helical; Name=XI" evidence="1">
    <location>
        <begin position="715"/>
        <end position="719" status="greater than"/>
    </location>
</feature>
<feature type="binding site" evidence="1">
    <location>
        <position position="564"/>
    </location>
    <ligand>
        <name>[4Fe-4S] cluster</name>
        <dbReference type="ChEBI" id="CHEBI:49883"/>
        <note>ligand shared between dimeric partners</note>
    </ligand>
</feature>
<feature type="binding site" evidence="1">
    <location>
        <position position="573"/>
    </location>
    <ligand>
        <name>[4Fe-4S] cluster</name>
        <dbReference type="ChEBI" id="CHEBI:49883"/>
        <note>ligand shared between dimeric partners</note>
    </ligand>
</feature>
<feature type="binding site" description="axial binding residue" evidence="1">
    <location>
        <position position="666"/>
    </location>
    <ligand>
        <name>chlorophyll a'</name>
        <dbReference type="ChEBI" id="CHEBI:189419"/>
        <label>A1</label>
    </ligand>
    <ligandPart>
        <name>Mg</name>
        <dbReference type="ChEBI" id="CHEBI:25107"/>
    </ligandPart>
</feature>
<feature type="binding site" description="axial binding residue" evidence="1">
    <location>
        <position position="674"/>
    </location>
    <ligand>
        <name>chlorophyll a</name>
        <dbReference type="ChEBI" id="CHEBI:58416"/>
        <label>A3</label>
    </ligand>
    <ligandPart>
        <name>Mg</name>
        <dbReference type="ChEBI" id="CHEBI:25107"/>
    </ligandPart>
</feature>
<feature type="binding site" evidence="1">
    <location>
        <position position="682"/>
    </location>
    <ligand>
        <name>chlorophyll a</name>
        <dbReference type="ChEBI" id="CHEBI:58416"/>
        <label>A3</label>
    </ligand>
</feature>
<feature type="binding site" evidence="1">
    <location>
        <position position="683"/>
    </location>
    <ligand>
        <name>phylloquinone</name>
        <dbReference type="ChEBI" id="CHEBI:18067"/>
        <label>A</label>
    </ligand>
</feature>
<feature type="non-terminal residue">
    <location>
        <position position="1"/>
    </location>
</feature>
<feature type="non-terminal residue">
    <location>
        <position position="719"/>
    </location>
</feature>
<geneLocation type="chloroplast"/>
<proteinExistence type="inferred from homology"/>